<reference key="1">
    <citation type="journal article" date="1996" name="J. Bacteriol.">
        <title>Characterization of the ftsZ gene from Mycoplasma pulmonis, an organism lacking a cell wall.</title>
        <authorList>
            <person name="Wang X."/>
            <person name="Lutkenhaus J."/>
        </authorList>
    </citation>
    <scope>NUCLEOTIDE SEQUENCE [GENOMIC DNA]</scope>
    <source>
        <strain>KD735-16</strain>
    </source>
</reference>
<reference key="2">
    <citation type="journal article" date="2001" name="Nucleic Acids Res.">
        <title>The complete genome sequence of the murine respiratory pathogen Mycoplasma pulmonis.</title>
        <authorList>
            <person name="Chambaud I."/>
            <person name="Heilig R."/>
            <person name="Ferris S."/>
            <person name="Barbe V."/>
            <person name="Samson D."/>
            <person name="Galisson F."/>
            <person name="Moszer I."/>
            <person name="Dybvig K."/>
            <person name="Wroblewski H."/>
            <person name="Viari A."/>
            <person name="Rocha E.P.C."/>
            <person name="Blanchard A."/>
        </authorList>
    </citation>
    <scope>NUCLEOTIDE SEQUENCE [LARGE SCALE GENOMIC DNA]</scope>
    <source>
        <strain>UAB CTIP</strain>
    </source>
</reference>
<sequence length="390" mass="41508">MSDLENFVPTANIKVIGVGGGGNNSVETMIQAGIQGVEFIVANTDIQALQRSSAPNFIHLGENKRGLGAGANPEVGKKAAEESIVEIKEKLKGADMVIITSGMGGGTGTGASPIIAKIARELGALTISIVTTPFEFEGNLRNKNAQEGIKNLRAVSDSIIIISNNKLLEQYGDAPMKDSFLFADTILKHTVKTITDIIAIPAHINLDFADVKTVMKDKGDALIGIGRASGKDRAVKAAIHAISSPIIETSIQGASHTIINITGSANLTLTEVHSAVNVIKNAVGPEMNTIFGATINESIGDEIYVSVIATGLSSSKKFNSEQEIKDEVSSMLKTMEIDLQASETKTILINDPLPKDEKMVLTSLLDRDSKILEKDDSQDDTLPFFLKRNV</sequence>
<feature type="chain" id="PRO_0000114362" description="Cell division protein FtsZ">
    <location>
        <begin position="1"/>
        <end position="390"/>
    </location>
</feature>
<feature type="binding site" evidence="1">
    <location>
        <begin position="20"/>
        <end position="24"/>
    </location>
    <ligand>
        <name>GTP</name>
        <dbReference type="ChEBI" id="CHEBI:37565"/>
    </ligand>
</feature>
<feature type="binding site" evidence="1">
    <location>
        <begin position="106"/>
        <end position="108"/>
    </location>
    <ligand>
        <name>GTP</name>
        <dbReference type="ChEBI" id="CHEBI:37565"/>
    </ligand>
</feature>
<feature type="binding site" evidence="1">
    <location>
        <position position="137"/>
    </location>
    <ligand>
        <name>GTP</name>
        <dbReference type="ChEBI" id="CHEBI:37565"/>
    </ligand>
</feature>
<feature type="binding site" evidence="1">
    <location>
        <position position="141"/>
    </location>
    <ligand>
        <name>GTP</name>
        <dbReference type="ChEBI" id="CHEBI:37565"/>
    </ligand>
</feature>
<feature type="binding site" evidence="1">
    <location>
        <position position="184"/>
    </location>
    <ligand>
        <name>GTP</name>
        <dbReference type="ChEBI" id="CHEBI:37565"/>
    </ligand>
</feature>
<feature type="sequence conflict" description="In Ref. 1; AAC44093." evidence="2" ref="1">
    <original>V</original>
    <variation>I</variation>
    <location>
        <position position="8"/>
    </location>
</feature>
<feature type="sequence conflict" description="In Ref. 1; AAC44093." evidence="2" ref="1">
    <original>I</original>
    <variation>T</variation>
    <location>
        <position position="161"/>
    </location>
</feature>
<proteinExistence type="inferred from homology"/>
<evidence type="ECO:0000255" key="1">
    <source>
        <dbReference type="HAMAP-Rule" id="MF_00909"/>
    </source>
</evidence>
<evidence type="ECO:0000305" key="2"/>
<comment type="function">
    <text evidence="1">Essential cell division protein that forms a contractile ring structure (Z ring) at the future cell division site. The regulation of the ring assembly controls the timing and the location of cell division. One of the functions of the FtsZ ring is to recruit other cell division proteins to the septum to produce a new cell wall between the dividing cells. Binds GTP and shows GTPase activity.</text>
</comment>
<comment type="subunit">
    <text evidence="1">Homodimer. Polymerizes to form a dynamic ring structure in a strictly GTP-dependent manner. Interacts directly with several other division proteins.</text>
</comment>
<comment type="subcellular location">
    <subcellularLocation>
        <location evidence="1">Cytoplasm</location>
    </subcellularLocation>
    <text evidence="1">Assembles at midcell at the inner surface of the cytoplasmic membrane.</text>
</comment>
<comment type="similarity">
    <text evidence="1">Belongs to the FtsZ family.</text>
</comment>
<protein>
    <recommendedName>
        <fullName evidence="1">Cell division protein FtsZ</fullName>
    </recommendedName>
</protein>
<keyword id="KW-0131">Cell cycle</keyword>
<keyword id="KW-0132">Cell division</keyword>
<keyword id="KW-0963">Cytoplasm</keyword>
<keyword id="KW-0342">GTP-binding</keyword>
<keyword id="KW-0547">Nucleotide-binding</keyword>
<keyword id="KW-1185">Reference proteome</keyword>
<keyword id="KW-0717">Septation</keyword>
<dbReference type="EMBL" id="U34931">
    <property type="protein sequence ID" value="AAC44093.1"/>
    <property type="molecule type" value="Genomic_DNA"/>
</dbReference>
<dbReference type="EMBL" id="AL445564">
    <property type="protein sequence ID" value="CAC13664.1"/>
    <property type="molecule type" value="Genomic_DNA"/>
</dbReference>
<dbReference type="PIR" id="C90573">
    <property type="entry name" value="C90573"/>
</dbReference>
<dbReference type="PIR" id="JC6014">
    <property type="entry name" value="JC6014"/>
</dbReference>
<dbReference type="RefSeq" id="WP_010925292.1">
    <property type="nucleotide sequence ID" value="NC_002771.1"/>
</dbReference>
<dbReference type="SMR" id="Q50318"/>
<dbReference type="STRING" id="272635.gene:17577092"/>
<dbReference type="KEGG" id="mpu:MYPU_4910"/>
<dbReference type="eggNOG" id="COG0206">
    <property type="taxonomic scope" value="Bacteria"/>
</dbReference>
<dbReference type="HOGENOM" id="CLU_024865_0_1_14"/>
<dbReference type="BioCyc" id="MPUL272635:G1GT6-495-MONOMER"/>
<dbReference type="Proteomes" id="UP000000528">
    <property type="component" value="Chromosome"/>
</dbReference>
<dbReference type="GO" id="GO:0032153">
    <property type="term" value="C:cell division site"/>
    <property type="evidence" value="ECO:0007669"/>
    <property type="project" value="UniProtKB-UniRule"/>
</dbReference>
<dbReference type="GO" id="GO:0005737">
    <property type="term" value="C:cytoplasm"/>
    <property type="evidence" value="ECO:0007669"/>
    <property type="project" value="UniProtKB-SubCell"/>
</dbReference>
<dbReference type="GO" id="GO:0005525">
    <property type="term" value="F:GTP binding"/>
    <property type="evidence" value="ECO:0007669"/>
    <property type="project" value="UniProtKB-UniRule"/>
</dbReference>
<dbReference type="GO" id="GO:0003924">
    <property type="term" value="F:GTPase activity"/>
    <property type="evidence" value="ECO:0007669"/>
    <property type="project" value="UniProtKB-UniRule"/>
</dbReference>
<dbReference type="GO" id="GO:0000917">
    <property type="term" value="P:division septum assembly"/>
    <property type="evidence" value="ECO:0007669"/>
    <property type="project" value="UniProtKB-KW"/>
</dbReference>
<dbReference type="GO" id="GO:0043093">
    <property type="term" value="P:FtsZ-dependent cytokinesis"/>
    <property type="evidence" value="ECO:0007669"/>
    <property type="project" value="UniProtKB-UniRule"/>
</dbReference>
<dbReference type="GO" id="GO:0051258">
    <property type="term" value="P:protein polymerization"/>
    <property type="evidence" value="ECO:0007669"/>
    <property type="project" value="UniProtKB-UniRule"/>
</dbReference>
<dbReference type="CDD" id="cd02201">
    <property type="entry name" value="FtsZ_type1"/>
    <property type="match status" value="1"/>
</dbReference>
<dbReference type="FunFam" id="3.40.50.1440:FF:000001">
    <property type="entry name" value="Cell division protein FtsZ"/>
    <property type="match status" value="1"/>
</dbReference>
<dbReference type="Gene3D" id="3.30.1330.20">
    <property type="entry name" value="Tubulin/FtsZ, C-terminal domain"/>
    <property type="match status" value="1"/>
</dbReference>
<dbReference type="Gene3D" id="3.40.50.1440">
    <property type="entry name" value="Tubulin/FtsZ, GTPase domain"/>
    <property type="match status" value="1"/>
</dbReference>
<dbReference type="HAMAP" id="MF_00909">
    <property type="entry name" value="FtsZ"/>
    <property type="match status" value="1"/>
</dbReference>
<dbReference type="InterPro" id="IPR000158">
    <property type="entry name" value="Cell_div_FtsZ"/>
</dbReference>
<dbReference type="InterPro" id="IPR020805">
    <property type="entry name" value="Cell_div_FtsZ_CS"/>
</dbReference>
<dbReference type="InterPro" id="IPR045061">
    <property type="entry name" value="FtsZ/CetZ"/>
</dbReference>
<dbReference type="InterPro" id="IPR024757">
    <property type="entry name" value="FtsZ_C"/>
</dbReference>
<dbReference type="InterPro" id="IPR008280">
    <property type="entry name" value="Tub_FtsZ_C"/>
</dbReference>
<dbReference type="InterPro" id="IPR037103">
    <property type="entry name" value="Tubulin/FtsZ-like_C"/>
</dbReference>
<dbReference type="InterPro" id="IPR018316">
    <property type="entry name" value="Tubulin/FtsZ_2-layer-sand-dom"/>
</dbReference>
<dbReference type="InterPro" id="IPR036525">
    <property type="entry name" value="Tubulin/FtsZ_GTPase_sf"/>
</dbReference>
<dbReference type="InterPro" id="IPR003008">
    <property type="entry name" value="Tubulin_FtsZ_GTPase"/>
</dbReference>
<dbReference type="NCBIfam" id="TIGR00065">
    <property type="entry name" value="ftsZ"/>
    <property type="match status" value="1"/>
</dbReference>
<dbReference type="PANTHER" id="PTHR30314">
    <property type="entry name" value="CELL DIVISION PROTEIN FTSZ-RELATED"/>
    <property type="match status" value="1"/>
</dbReference>
<dbReference type="PANTHER" id="PTHR30314:SF3">
    <property type="entry name" value="MITOCHONDRIAL DIVISION PROTEIN FSZA"/>
    <property type="match status" value="1"/>
</dbReference>
<dbReference type="Pfam" id="PF12327">
    <property type="entry name" value="FtsZ_C"/>
    <property type="match status" value="1"/>
</dbReference>
<dbReference type="Pfam" id="PF00091">
    <property type="entry name" value="Tubulin"/>
    <property type="match status" value="1"/>
</dbReference>
<dbReference type="PRINTS" id="PR00423">
    <property type="entry name" value="CELLDVISFTSZ"/>
</dbReference>
<dbReference type="SMART" id="SM00864">
    <property type="entry name" value="Tubulin"/>
    <property type="match status" value="1"/>
</dbReference>
<dbReference type="SMART" id="SM00865">
    <property type="entry name" value="Tubulin_C"/>
    <property type="match status" value="1"/>
</dbReference>
<dbReference type="SUPFAM" id="SSF55307">
    <property type="entry name" value="Tubulin C-terminal domain-like"/>
    <property type="match status" value="1"/>
</dbReference>
<dbReference type="SUPFAM" id="SSF52490">
    <property type="entry name" value="Tubulin nucleotide-binding domain-like"/>
    <property type="match status" value="1"/>
</dbReference>
<dbReference type="PROSITE" id="PS01134">
    <property type="entry name" value="FTSZ_1"/>
    <property type="match status" value="1"/>
</dbReference>
<dbReference type="PROSITE" id="PS01135">
    <property type="entry name" value="FTSZ_2"/>
    <property type="match status" value="1"/>
</dbReference>
<gene>
    <name evidence="1" type="primary">ftsZ</name>
    <name type="ordered locus">MYPU_4910</name>
</gene>
<name>FTSZ_MYCPU</name>
<organism>
    <name type="scientific">Mycoplasmopsis pulmonis (strain UAB CTIP)</name>
    <name type="common">Mycoplasma pulmonis</name>
    <dbReference type="NCBI Taxonomy" id="272635"/>
    <lineage>
        <taxon>Bacteria</taxon>
        <taxon>Bacillati</taxon>
        <taxon>Mycoplasmatota</taxon>
        <taxon>Mycoplasmoidales</taxon>
        <taxon>Metamycoplasmataceae</taxon>
        <taxon>Mycoplasmopsis</taxon>
    </lineage>
</organism>
<accession>Q50318</accession>